<name>RPOZ_HELPY</name>
<evidence type="ECO:0000250" key="1"/>
<evidence type="ECO:0000305" key="2"/>
<comment type="function">
    <text evidence="1">Promotes RNA polymerase assembly. Latches the N- and C-terminal regions of the beta' subunit thereby facilitating its interaction with the beta and alpha subunits (By similarity).</text>
</comment>
<comment type="catalytic activity">
    <reaction>
        <text>RNA(n) + a ribonucleoside 5'-triphosphate = RNA(n+1) + diphosphate</text>
        <dbReference type="Rhea" id="RHEA:21248"/>
        <dbReference type="Rhea" id="RHEA-COMP:14527"/>
        <dbReference type="Rhea" id="RHEA-COMP:17342"/>
        <dbReference type="ChEBI" id="CHEBI:33019"/>
        <dbReference type="ChEBI" id="CHEBI:61557"/>
        <dbReference type="ChEBI" id="CHEBI:140395"/>
        <dbReference type="EC" id="2.7.7.6"/>
    </reaction>
</comment>
<comment type="subunit">
    <text evidence="1">The RNAP catalytic core consists of 2 alpha, 1 beta/beta' and 1 omega subunit. When a sigma factor is associated with the core the holoenzyme is formed, which can initiate transcription (By similarity).</text>
</comment>
<comment type="similarity">
    <text evidence="2">Belongs to the RNA polymerase subunit omega family.</text>
</comment>
<comment type="sequence caution" evidence="2">
    <conflict type="erroneous initiation">
        <sequence resource="EMBL-CDS" id="AAD07826"/>
    </conflict>
</comment>
<sequence length="74" mass="8505">MKKERTESLVAQALKNIGNDRYMLDNLVFARVKQLNAGAKTLVNMDPKRHKLVDIAIREIAEGKIDIDRIDERN</sequence>
<protein>
    <recommendedName>
        <fullName>DNA-directed RNA polymerase subunit omega</fullName>
        <shortName>RNAP omega subunit</shortName>
        <ecNumber>2.7.7.6</ecNumber>
    </recommendedName>
    <alternativeName>
        <fullName>RNA polymerase omega subunit</fullName>
    </alternativeName>
    <alternativeName>
        <fullName>Transcriptase subunit omega</fullName>
    </alternativeName>
</protein>
<feature type="chain" id="PRO_0000128943" description="DNA-directed RNA polymerase subunit omega">
    <location>
        <begin position="1"/>
        <end position="74"/>
    </location>
</feature>
<accession>P60325</accession>
<accession>O25467</accession>
<accession>Q9ZL67</accession>
<organism>
    <name type="scientific">Helicobacter pylori (strain ATCC 700392 / 26695)</name>
    <name type="common">Campylobacter pylori</name>
    <dbReference type="NCBI Taxonomy" id="85962"/>
    <lineage>
        <taxon>Bacteria</taxon>
        <taxon>Pseudomonadati</taxon>
        <taxon>Campylobacterota</taxon>
        <taxon>Epsilonproteobacteria</taxon>
        <taxon>Campylobacterales</taxon>
        <taxon>Helicobacteraceae</taxon>
        <taxon>Helicobacter</taxon>
    </lineage>
</organism>
<gene>
    <name type="primary">rpoZ</name>
    <name type="ordered locus">HP_0776</name>
</gene>
<reference key="1">
    <citation type="journal article" date="1997" name="Nature">
        <title>The complete genome sequence of the gastric pathogen Helicobacter pylori.</title>
        <authorList>
            <person name="Tomb J.-F."/>
            <person name="White O."/>
            <person name="Kerlavage A.R."/>
            <person name="Clayton R.A."/>
            <person name="Sutton G.G."/>
            <person name="Fleischmann R.D."/>
            <person name="Ketchum K.A."/>
            <person name="Klenk H.-P."/>
            <person name="Gill S.R."/>
            <person name="Dougherty B.A."/>
            <person name="Nelson K.E."/>
            <person name="Quackenbush J."/>
            <person name="Zhou L."/>
            <person name="Kirkness E.F."/>
            <person name="Peterson S.N."/>
            <person name="Loftus B.J."/>
            <person name="Richardson D.L."/>
            <person name="Dodson R.J."/>
            <person name="Khalak H.G."/>
            <person name="Glodek A."/>
            <person name="McKenney K."/>
            <person name="FitzGerald L.M."/>
            <person name="Lee N."/>
            <person name="Adams M.D."/>
            <person name="Hickey E.K."/>
            <person name="Berg D.E."/>
            <person name="Gocayne J.D."/>
            <person name="Utterback T.R."/>
            <person name="Peterson J.D."/>
            <person name="Kelley J.M."/>
            <person name="Cotton M.D."/>
            <person name="Weidman J.F."/>
            <person name="Fujii C."/>
            <person name="Bowman C."/>
            <person name="Watthey L."/>
            <person name="Wallin E."/>
            <person name="Hayes W.S."/>
            <person name="Borodovsky M."/>
            <person name="Karp P.D."/>
            <person name="Smith H.O."/>
            <person name="Fraser C.M."/>
            <person name="Venter J.C."/>
        </authorList>
    </citation>
    <scope>NUCLEOTIDE SEQUENCE [LARGE SCALE GENOMIC DNA]</scope>
    <source>
        <strain>ATCC 700392 / 26695</strain>
    </source>
</reference>
<dbReference type="EC" id="2.7.7.6"/>
<dbReference type="EMBL" id="AE000511">
    <property type="protein sequence ID" value="AAD07826.1"/>
    <property type="status" value="ALT_INIT"/>
    <property type="molecule type" value="Genomic_DNA"/>
</dbReference>
<dbReference type="PIR" id="H64616">
    <property type="entry name" value="H64616"/>
</dbReference>
<dbReference type="RefSeq" id="NP_207569.1">
    <property type="nucleotide sequence ID" value="NC_000915.1"/>
</dbReference>
<dbReference type="RefSeq" id="WP_000712202.1">
    <property type="nucleotide sequence ID" value="NC_018939.1"/>
</dbReference>
<dbReference type="SMR" id="P60325"/>
<dbReference type="IntAct" id="P60325">
    <property type="interactions" value="9"/>
</dbReference>
<dbReference type="MINT" id="P60325"/>
<dbReference type="STRING" id="85962.HP_0776"/>
<dbReference type="PaxDb" id="85962-C694_03985"/>
<dbReference type="EnsemblBacteria" id="AAD07826">
    <property type="protein sequence ID" value="AAD07826"/>
    <property type="gene ID" value="HP_0776"/>
</dbReference>
<dbReference type="KEGG" id="heo:C694_03985"/>
<dbReference type="KEGG" id="hpy:HP_0776"/>
<dbReference type="PATRIC" id="fig|85962.47.peg.828"/>
<dbReference type="eggNOG" id="COG1758">
    <property type="taxonomic scope" value="Bacteria"/>
</dbReference>
<dbReference type="InParanoid" id="P60325"/>
<dbReference type="OrthoDB" id="5334728at2"/>
<dbReference type="Proteomes" id="UP000000429">
    <property type="component" value="Chromosome"/>
</dbReference>
<dbReference type="GO" id="GO:0000428">
    <property type="term" value="C:DNA-directed RNA polymerase complex"/>
    <property type="evidence" value="ECO:0007669"/>
    <property type="project" value="UniProtKB-KW"/>
</dbReference>
<dbReference type="GO" id="GO:0003677">
    <property type="term" value="F:DNA binding"/>
    <property type="evidence" value="ECO:0007669"/>
    <property type="project" value="UniProtKB-UniRule"/>
</dbReference>
<dbReference type="GO" id="GO:0003899">
    <property type="term" value="F:DNA-directed RNA polymerase activity"/>
    <property type="evidence" value="ECO:0007669"/>
    <property type="project" value="UniProtKB-UniRule"/>
</dbReference>
<dbReference type="GO" id="GO:0006351">
    <property type="term" value="P:DNA-templated transcription"/>
    <property type="evidence" value="ECO:0007669"/>
    <property type="project" value="UniProtKB-UniRule"/>
</dbReference>
<dbReference type="Gene3D" id="3.90.940.10">
    <property type="match status" value="1"/>
</dbReference>
<dbReference type="HAMAP" id="MF_00366">
    <property type="entry name" value="RNApol_bact_RpoZ"/>
    <property type="match status" value="1"/>
</dbReference>
<dbReference type="InterPro" id="IPR003716">
    <property type="entry name" value="DNA-dir_RNA_pol_omega"/>
</dbReference>
<dbReference type="InterPro" id="IPR006110">
    <property type="entry name" value="Pol_omega/Rpo6/RPB6"/>
</dbReference>
<dbReference type="InterPro" id="IPR036161">
    <property type="entry name" value="RPB6/omega-like_sf"/>
</dbReference>
<dbReference type="NCBIfam" id="NF001579">
    <property type="entry name" value="PRK00392.6-2"/>
    <property type="match status" value="1"/>
</dbReference>
<dbReference type="NCBIfam" id="TIGR00690">
    <property type="entry name" value="rpoZ"/>
    <property type="match status" value="1"/>
</dbReference>
<dbReference type="Pfam" id="PF01192">
    <property type="entry name" value="RNA_pol_Rpb6"/>
    <property type="match status" value="1"/>
</dbReference>
<dbReference type="SMART" id="SM01409">
    <property type="entry name" value="RNA_pol_Rpb6"/>
    <property type="match status" value="1"/>
</dbReference>
<dbReference type="SUPFAM" id="SSF63562">
    <property type="entry name" value="RPB6/omega subunit-like"/>
    <property type="match status" value="1"/>
</dbReference>
<proteinExistence type="inferred from homology"/>
<keyword id="KW-0240">DNA-directed RNA polymerase</keyword>
<keyword id="KW-0548">Nucleotidyltransferase</keyword>
<keyword id="KW-1185">Reference proteome</keyword>
<keyword id="KW-0804">Transcription</keyword>
<keyword id="KW-0808">Transferase</keyword>